<feature type="chain" id="PRO_1000143829" description="Large ribosomal subunit protein bL21">
    <location>
        <begin position="1"/>
        <end position="104"/>
    </location>
</feature>
<name>RL21_OPITP</name>
<comment type="function">
    <text evidence="1">This protein binds to 23S rRNA in the presence of protein L20.</text>
</comment>
<comment type="subunit">
    <text evidence="1">Part of the 50S ribosomal subunit. Contacts protein L20.</text>
</comment>
<comment type="similarity">
    <text evidence="1">Belongs to the bacterial ribosomal protein bL21 family.</text>
</comment>
<evidence type="ECO:0000255" key="1">
    <source>
        <dbReference type="HAMAP-Rule" id="MF_01363"/>
    </source>
</evidence>
<evidence type="ECO:0000305" key="2"/>
<sequence>MKATIKTQGQQFTVSEGDILTVNRYPNTEAGATVEISEVLATGEGENFRVGTPTLAGAIVSAKILENKRGEKVIVFKKRKRKGMERKRGHRQELSVIKIESIKV</sequence>
<dbReference type="EMBL" id="CP001032">
    <property type="protein sequence ID" value="ACB76421.1"/>
    <property type="molecule type" value="Genomic_DNA"/>
</dbReference>
<dbReference type="RefSeq" id="WP_012375950.1">
    <property type="nucleotide sequence ID" value="NC_010571.1"/>
</dbReference>
<dbReference type="SMR" id="B1ZZL8"/>
<dbReference type="STRING" id="452637.Oter_3141"/>
<dbReference type="KEGG" id="ote:Oter_3141"/>
<dbReference type="eggNOG" id="COG0261">
    <property type="taxonomic scope" value="Bacteria"/>
</dbReference>
<dbReference type="HOGENOM" id="CLU_061463_3_2_0"/>
<dbReference type="OrthoDB" id="9813334at2"/>
<dbReference type="Proteomes" id="UP000007013">
    <property type="component" value="Chromosome"/>
</dbReference>
<dbReference type="GO" id="GO:0005737">
    <property type="term" value="C:cytoplasm"/>
    <property type="evidence" value="ECO:0007669"/>
    <property type="project" value="UniProtKB-ARBA"/>
</dbReference>
<dbReference type="GO" id="GO:1990904">
    <property type="term" value="C:ribonucleoprotein complex"/>
    <property type="evidence" value="ECO:0007669"/>
    <property type="project" value="UniProtKB-KW"/>
</dbReference>
<dbReference type="GO" id="GO:0005840">
    <property type="term" value="C:ribosome"/>
    <property type="evidence" value="ECO:0007669"/>
    <property type="project" value="UniProtKB-KW"/>
</dbReference>
<dbReference type="GO" id="GO:0019843">
    <property type="term" value="F:rRNA binding"/>
    <property type="evidence" value="ECO:0007669"/>
    <property type="project" value="UniProtKB-UniRule"/>
</dbReference>
<dbReference type="GO" id="GO:0003735">
    <property type="term" value="F:structural constituent of ribosome"/>
    <property type="evidence" value="ECO:0007669"/>
    <property type="project" value="InterPro"/>
</dbReference>
<dbReference type="GO" id="GO:0006412">
    <property type="term" value="P:translation"/>
    <property type="evidence" value="ECO:0007669"/>
    <property type="project" value="UniProtKB-UniRule"/>
</dbReference>
<dbReference type="HAMAP" id="MF_01363">
    <property type="entry name" value="Ribosomal_bL21"/>
    <property type="match status" value="1"/>
</dbReference>
<dbReference type="InterPro" id="IPR028909">
    <property type="entry name" value="bL21-like"/>
</dbReference>
<dbReference type="InterPro" id="IPR036164">
    <property type="entry name" value="bL21-like_sf"/>
</dbReference>
<dbReference type="InterPro" id="IPR001787">
    <property type="entry name" value="Ribosomal_bL21"/>
</dbReference>
<dbReference type="InterPro" id="IPR018258">
    <property type="entry name" value="Ribosomal_bL21_CS"/>
</dbReference>
<dbReference type="NCBIfam" id="TIGR00061">
    <property type="entry name" value="L21"/>
    <property type="match status" value="1"/>
</dbReference>
<dbReference type="PANTHER" id="PTHR21349">
    <property type="entry name" value="50S RIBOSOMAL PROTEIN L21"/>
    <property type="match status" value="1"/>
</dbReference>
<dbReference type="PANTHER" id="PTHR21349:SF0">
    <property type="entry name" value="LARGE RIBOSOMAL SUBUNIT PROTEIN BL21M"/>
    <property type="match status" value="1"/>
</dbReference>
<dbReference type="Pfam" id="PF00829">
    <property type="entry name" value="Ribosomal_L21p"/>
    <property type="match status" value="1"/>
</dbReference>
<dbReference type="SUPFAM" id="SSF141091">
    <property type="entry name" value="L21p-like"/>
    <property type="match status" value="1"/>
</dbReference>
<dbReference type="PROSITE" id="PS01169">
    <property type="entry name" value="RIBOSOMAL_L21"/>
    <property type="match status" value="1"/>
</dbReference>
<organism>
    <name type="scientific">Opitutus terrae (strain DSM 11246 / JCM 15787 / PB90-1)</name>
    <dbReference type="NCBI Taxonomy" id="452637"/>
    <lineage>
        <taxon>Bacteria</taxon>
        <taxon>Pseudomonadati</taxon>
        <taxon>Verrucomicrobiota</taxon>
        <taxon>Opitutia</taxon>
        <taxon>Opitutales</taxon>
        <taxon>Opitutaceae</taxon>
        <taxon>Opitutus</taxon>
    </lineage>
</organism>
<proteinExistence type="inferred from homology"/>
<protein>
    <recommendedName>
        <fullName evidence="1">Large ribosomal subunit protein bL21</fullName>
    </recommendedName>
    <alternativeName>
        <fullName evidence="2">50S ribosomal protein L21</fullName>
    </alternativeName>
</protein>
<accession>B1ZZL8</accession>
<keyword id="KW-1185">Reference proteome</keyword>
<keyword id="KW-0687">Ribonucleoprotein</keyword>
<keyword id="KW-0689">Ribosomal protein</keyword>
<keyword id="KW-0694">RNA-binding</keyword>
<keyword id="KW-0699">rRNA-binding</keyword>
<reference key="1">
    <citation type="journal article" date="2011" name="J. Bacteriol.">
        <title>Genome sequence of the verrucomicrobium Opitutus terrae PB90-1, an abundant inhabitant of rice paddy soil ecosystems.</title>
        <authorList>
            <person name="van Passel M.W."/>
            <person name="Kant R."/>
            <person name="Palva A."/>
            <person name="Copeland A."/>
            <person name="Lucas S."/>
            <person name="Lapidus A."/>
            <person name="Glavina del Rio T."/>
            <person name="Pitluck S."/>
            <person name="Goltsman E."/>
            <person name="Clum A."/>
            <person name="Sun H."/>
            <person name="Schmutz J."/>
            <person name="Larimer F.W."/>
            <person name="Land M.L."/>
            <person name="Hauser L."/>
            <person name="Kyrpides N."/>
            <person name="Mikhailova N."/>
            <person name="Richardson P.P."/>
            <person name="Janssen P.H."/>
            <person name="de Vos W.M."/>
            <person name="Smidt H."/>
        </authorList>
    </citation>
    <scope>NUCLEOTIDE SEQUENCE [LARGE SCALE GENOMIC DNA]</scope>
    <source>
        <strain>DSM 11246 / JCM 15787 / PB90-1</strain>
    </source>
</reference>
<gene>
    <name evidence="1" type="primary">rplU</name>
    <name type="ordered locus">Oter_3141</name>
</gene>